<comment type="function">
    <text evidence="1">Endoribonuclease that initiates mRNA decay.</text>
</comment>
<comment type="subcellular location">
    <subcellularLocation>
        <location evidence="1">Cell membrane</location>
        <topology evidence="1">Single-pass membrane protein</topology>
    </subcellularLocation>
</comment>
<comment type="similarity">
    <text evidence="1">Belongs to the RNase Y family.</text>
</comment>
<dbReference type="EC" id="3.1.-.-" evidence="1"/>
<dbReference type="EMBL" id="AP006627">
    <property type="protein sequence ID" value="BAD64729.1"/>
    <property type="molecule type" value="Genomic_DNA"/>
</dbReference>
<dbReference type="SMR" id="Q5WFX6"/>
<dbReference type="STRING" id="66692.ABC2194"/>
<dbReference type="KEGG" id="bcl:ABC2194"/>
<dbReference type="eggNOG" id="COG1418">
    <property type="taxonomic scope" value="Bacteria"/>
</dbReference>
<dbReference type="HOGENOM" id="CLU_028328_1_0_9"/>
<dbReference type="Proteomes" id="UP000001168">
    <property type="component" value="Chromosome"/>
</dbReference>
<dbReference type="GO" id="GO:0005886">
    <property type="term" value="C:plasma membrane"/>
    <property type="evidence" value="ECO:0007669"/>
    <property type="project" value="UniProtKB-SubCell"/>
</dbReference>
<dbReference type="GO" id="GO:0003723">
    <property type="term" value="F:RNA binding"/>
    <property type="evidence" value="ECO:0007669"/>
    <property type="project" value="UniProtKB-UniRule"/>
</dbReference>
<dbReference type="GO" id="GO:0004521">
    <property type="term" value="F:RNA endonuclease activity"/>
    <property type="evidence" value="ECO:0007669"/>
    <property type="project" value="UniProtKB-UniRule"/>
</dbReference>
<dbReference type="GO" id="GO:0006402">
    <property type="term" value="P:mRNA catabolic process"/>
    <property type="evidence" value="ECO:0007669"/>
    <property type="project" value="UniProtKB-UniRule"/>
</dbReference>
<dbReference type="CDD" id="cd00077">
    <property type="entry name" value="HDc"/>
    <property type="match status" value="1"/>
</dbReference>
<dbReference type="CDD" id="cd22431">
    <property type="entry name" value="KH-I_RNaseY"/>
    <property type="match status" value="1"/>
</dbReference>
<dbReference type="FunFam" id="1.10.3210.10:FF:000003">
    <property type="entry name" value="Ribonuclease Y"/>
    <property type="match status" value="1"/>
</dbReference>
<dbReference type="FunFam" id="3.30.1370.10:FF:000006">
    <property type="entry name" value="Ribonuclease Y"/>
    <property type="match status" value="1"/>
</dbReference>
<dbReference type="Gene3D" id="1.10.3210.10">
    <property type="entry name" value="Hypothetical protein af1432"/>
    <property type="match status" value="1"/>
</dbReference>
<dbReference type="Gene3D" id="3.30.1370.10">
    <property type="entry name" value="K Homology domain, type 1"/>
    <property type="match status" value="1"/>
</dbReference>
<dbReference type="HAMAP" id="MF_00335">
    <property type="entry name" value="RNase_Y"/>
    <property type="match status" value="1"/>
</dbReference>
<dbReference type="InterPro" id="IPR003607">
    <property type="entry name" value="HD/PDEase_dom"/>
</dbReference>
<dbReference type="InterPro" id="IPR006674">
    <property type="entry name" value="HD_domain"/>
</dbReference>
<dbReference type="InterPro" id="IPR006675">
    <property type="entry name" value="HDIG_dom"/>
</dbReference>
<dbReference type="InterPro" id="IPR004087">
    <property type="entry name" value="KH_dom"/>
</dbReference>
<dbReference type="InterPro" id="IPR004088">
    <property type="entry name" value="KH_dom_type_1"/>
</dbReference>
<dbReference type="InterPro" id="IPR036612">
    <property type="entry name" value="KH_dom_type_1_sf"/>
</dbReference>
<dbReference type="InterPro" id="IPR017705">
    <property type="entry name" value="Ribonuclease_Y"/>
</dbReference>
<dbReference type="InterPro" id="IPR022711">
    <property type="entry name" value="RNase_Y_N"/>
</dbReference>
<dbReference type="NCBIfam" id="TIGR00277">
    <property type="entry name" value="HDIG"/>
    <property type="match status" value="1"/>
</dbReference>
<dbReference type="NCBIfam" id="TIGR03319">
    <property type="entry name" value="RNase_Y"/>
    <property type="match status" value="1"/>
</dbReference>
<dbReference type="PANTHER" id="PTHR12826">
    <property type="entry name" value="RIBONUCLEASE Y"/>
    <property type="match status" value="1"/>
</dbReference>
<dbReference type="PANTHER" id="PTHR12826:SF15">
    <property type="entry name" value="RIBONUCLEASE Y"/>
    <property type="match status" value="1"/>
</dbReference>
<dbReference type="Pfam" id="PF01966">
    <property type="entry name" value="HD"/>
    <property type="match status" value="1"/>
</dbReference>
<dbReference type="Pfam" id="PF00013">
    <property type="entry name" value="KH_1"/>
    <property type="match status" value="1"/>
</dbReference>
<dbReference type="Pfam" id="PF12072">
    <property type="entry name" value="RNase_Y_N"/>
    <property type="match status" value="1"/>
</dbReference>
<dbReference type="SMART" id="SM00471">
    <property type="entry name" value="HDc"/>
    <property type="match status" value="1"/>
</dbReference>
<dbReference type="SMART" id="SM00322">
    <property type="entry name" value="KH"/>
    <property type="match status" value="1"/>
</dbReference>
<dbReference type="SUPFAM" id="SSF54791">
    <property type="entry name" value="Eukaryotic type KH-domain (KH-domain type I)"/>
    <property type="match status" value="1"/>
</dbReference>
<dbReference type="SUPFAM" id="SSF109604">
    <property type="entry name" value="HD-domain/PDEase-like"/>
    <property type="match status" value="1"/>
</dbReference>
<dbReference type="PROSITE" id="PS51831">
    <property type="entry name" value="HD"/>
    <property type="match status" value="1"/>
</dbReference>
<dbReference type="PROSITE" id="PS50084">
    <property type="entry name" value="KH_TYPE_1"/>
    <property type="match status" value="1"/>
</dbReference>
<proteinExistence type="inferred from homology"/>
<accession>Q5WFX6</accession>
<organism>
    <name type="scientific">Shouchella clausii (strain KSM-K16)</name>
    <name type="common">Alkalihalobacillus clausii</name>
    <dbReference type="NCBI Taxonomy" id="66692"/>
    <lineage>
        <taxon>Bacteria</taxon>
        <taxon>Bacillati</taxon>
        <taxon>Bacillota</taxon>
        <taxon>Bacilli</taxon>
        <taxon>Bacillales</taxon>
        <taxon>Bacillaceae</taxon>
        <taxon>Shouchella</taxon>
    </lineage>
</organism>
<evidence type="ECO:0000255" key="1">
    <source>
        <dbReference type="HAMAP-Rule" id="MF_00335"/>
    </source>
</evidence>
<evidence type="ECO:0000255" key="2">
    <source>
        <dbReference type="PROSITE-ProRule" id="PRU01175"/>
    </source>
</evidence>
<evidence type="ECO:0000256" key="3">
    <source>
        <dbReference type="SAM" id="MobiDB-lite"/>
    </source>
</evidence>
<reference key="1">
    <citation type="submission" date="2003-10" db="EMBL/GenBank/DDBJ databases">
        <title>The complete genome sequence of the alkaliphilic Bacillus clausii KSM-K16.</title>
        <authorList>
            <person name="Takaki Y."/>
            <person name="Kageyama Y."/>
            <person name="Shimamura S."/>
            <person name="Suzuki H."/>
            <person name="Nishi S."/>
            <person name="Hatada Y."/>
            <person name="Kawai S."/>
            <person name="Ito S."/>
            <person name="Horikoshi K."/>
        </authorList>
    </citation>
    <scope>NUCLEOTIDE SEQUENCE [LARGE SCALE GENOMIC DNA]</scope>
    <source>
        <strain>KSM-K16</strain>
    </source>
</reference>
<protein>
    <recommendedName>
        <fullName evidence="1">Ribonuclease Y</fullName>
        <shortName evidence="1">RNase Y</shortName>
        <ecNumber evidence="1">3.1.-.-</ecNumber>
    </recommendedName>
</protein>
<feature type="chain" id="PRO_0000344818" description="Ribonuclease Y">
    <location>
        <begin position="1"/>
        <end position="525"/>
    </location>
</feature>
<feature type="transmembrane region" description="Helical" evidence="1">
    <location>
        <begin position="9"/>
        <end position="29"/>
    </location>
</feature>
<feature type="domain" description="KH" evidence="1">
    <location>
        <begin position="215"/>
        <end position="278"/>
    </location>
</feature>
<feature type="domain" description="HD" evidence="2">
    <location>
        <begin position="341"/>
        <end position="434"/>
    </location>
</feature>
<feature type="region of interest" description="Disordered" evidence="3">
    <location>
        <begin position="109"/>
        <end position="130"/>
    </location>
</feature>
<name>RNY_SHOC1</name>
<gene>
    <name evidence="1" type="primary">rny</name>
    <name type="ordered locus">ABC2194</name>
</gene>
<sequence>MPSYTLSLLVLCLIVLAFSVVFAVVGYLVRKSVAEAKISSAEHAAKQMIDDAKREAETNKKEAILEVKDEVHKLRSDAEREVRERRNEIQKQEHRLVQKEEILDRKSETLDKKEESLEKREESLAKKQRQVEEMESKMSQLLVEQKQELERVSGLSREEARMIIRQEVEQEIAHETALLIKEKTAEAKETADKRSKEILSLAIQRCSADHVAETTVSVVNLPNDEMKGRIIGREGRNIRALETLTGIDLIIDDTPEAVILSGFDPIRREIARSALEKLVQDGRIHPARIEEMVDKSRREVDETIREYGEQTTFEVGVHGLHPDLIKILGRLRFRTSYGQNVLKHSMEVAHLAGIMAAELGEDVKLAKRAGLLHDIGKAIDHEVEGSHVEIGVELATKYKEHPVVINAIASHHGDTESTSIISTLVAAADALSAARPGARRETLETYIRRLEKLEEISESFDGVEKTFAIQAGREVRIMVRPDVVDDALAHKLARDITKKIEQELDYPGHIRVTVIRETRAVEYAK</sequence>
<keyword id="KW-1003">Cell membrane</keyword>
<keyword id="KW-0255">Endonuclease</keyword>
<keyword id="KW-0378">Hydrolase</keyword>
<keyword id="KW-0472">Membrane</keyword>
<keyword id="KW-0540">Nuclease</keyword>
<keyword id="KW-1185">Reference proteome</keyword>
<keyword id="KW-0694">RNA-binding</keyword>
<keyword id="KW-0812">Transmembrane</keyword>
<keyword id="KW-1133">Transmembrane helix</keyword>